<organism>
    <name type="scientific">Nicotiana glauca</name>
    <name type="common">Glaucous tobacco</name>
    <name type="synonym">Tree tobacco</name>
    <dbReference type="NCBI Taxonomy" id="4090"/>
    <lineage>
        <taxon>Eukaryota</taxon>
        <taxon>Viridiplantae</taxon>
        <taxon>Streptophyta</taxon>
        <taxon>Embryophyta</taxon>
        <taxon>Tracheophyta</taxon>
        <taxon>Spermatophyta</taxon>
        <taxon>Magnoliopsida</taxon>
        <taxon>eudicotyledons</taxon>
        <taxon>Gunneridae</taxon>
        <taxon>Pentapetalae</taxon>
        <taxon>asterids</taxon>
        <taxon>lamiids</taxon>
        <taxon>Solanales</taxon>
        <taxon>Solanaceae</taxon>
        <taxon>Nicotianoideae</taxon>
        <taxon>Nicotianeae</taxon>
        <taxon>Nicotiana</taxon>
    </lineage>
</organism>
<gene>
    <name evidence="6" type="primary">A622</name>
</gene>
<name>IFRH_NICGL</name>
<dbReference type="EC" id="1.3.1.-" evidence="7"/>
<dbReference type="EMBL" id="FM173206">
    <property type="protein sequence ID" value="CAQ64599.1"/>
    <property type="molecule type" value="Genomic_DNA"/>
</dbReference>
<dbReference type="SMR" id="B7UEU8"/>
<dbReference type="UniPathway" id="UPA00107"/>
<dbReference type="GO" id="GO:0005737">
    <property type="term" value="C:cytoplasm"/>
    <property type="evidence" value="ECO:0007669"/>
    <property type="project" value="UniProtKB-SubCell"/>
</dbReference>
<dbReference type="GO" id="GO:0070402">
    <property type="term" value="F:NADPH binding"/>
    <property type="evidence" value="ECO:0000314"/>
    <property type="project" value="UniProtKB"/>
</dbReference>
<dbReference type="GO" id="GO:0016491">
    <property type="term" value="F:oxidoreductase activity"/>
    <property type="evidence" value="ECO:0000315"/>
    <property type="project" value="UniProtKB"/>
</dbReference>
<dbReference type="GO" id="GO:0009821">
    <property type="term" value="P:alkaloid biosynthetic process"/>
    <property type="evidence" value="ECO:0000315"/>
    <property type="project" value="UniProtKB"/>
</dbReference>
<dbReference type="GO" id="GO:0042179">
    <property type="term" value="P:nicotine biosynthetic process"/>
    <property type="evidence" value="ECO:0000315"/>
    <property type="project" value="UniProtKB"/>
</dbReference>
<dbReference type="GO" id="GO:0009753">
    <property type="term" value="P:response to jasmonic acid"/>
    <property type="evidence" value="ECO:0000270"/>
    <property type="project" value="UniProtKB"/>
</dbReference>
<dbReference type="GO" id="GO:0009611">
    <property type="term" value="P:response to wounding"/>
    <property type="evidence" value="ECO:0000270"/>
    <property type="project" value="UniProtKB"/>
</dbReference>
<dbReference type="CDD" id="cd05259">
    <property type="entry name" value="PCBER_SDR_a"/>
    <property type="match status" value="1"/>
</dbReference>
<dbReference type="Gene3D" id="3.40.50.720">
    <property type="entry name" value="NAD(P)-binding Rossmann-like Domain"/>
    <property type="match status" value="1"/>
</dbReference>
<dbReference type="Gene3D" id="3.90.25.10">
    <property type="entry name" value="UDP-galactose 4-epimerase, domain 1"/>
    <property type="match status" value="1"/>
</dbReference>
<dbReference type="InterPro" id="IPR036291">
    <property type="entry name" value="NAD(P)-bd_dom_sf"/>
</dbReference>
<dbReference type="InterPro" id="IPR008030">
    <property type="entry name" value="NmrA-like"/>
</dbReference>
<dbReference type="InterPro" id="IPR050608">
    <property type="entry name" value="NmrA-type/Isoflavone_red_sf"/>
</dbReference>
<dbReference type="InterPro" id="IPR045312">
    <property type="entry name" value="PCBER-like"/>
</dbReference>
<dbReference type="PANTHER" id="PTHR43349:SF49">
    <property type="entry name" value="ISOFLAVONE REDUCTASE HOMOLOG A622"/>
    <property type="match status" value="1"/>
</dbReference>
<dbReference type="PANTHER" id="PTHR43349">
    <property type="entry name" value="PINORESINOL REDUCTASE-RELATED"/>
    <property type="match status" value="1"/>
</dbReference>
<dbReference type="Pfam" id="PF05368">
    <property type="entry name" value="NmrA"/>
    <property type="match status" value="1"/>
</dbReference>
<dbReference type="SUPFAM" id="SSF51735">
    <property type="entry name" value="NAD(P)-binding Rossmann-fold domains"/>
    <property type="match status" value="1"/>
</dbReference>
<reference key="1">
    <citation type="journal article" date="2009" name="Plant Mol. Biol.">
        <title>The A622 gene in Nicotiana glauca (tree tobacco): evidence for a functional role in pyridine alkaloid synthesis.</title>
        <authorList>
            <person name="Deboer K.D."/>
            <person name="Lye J.C."/>
            <person name="Aitken C.D."/>
            <person name="Su A.K."/>
            <person name="Hamill J.D."/>
        </authorList>
    </citation>
    <scope>NUCLEOTIDE SEQUENCE [GENOMIC DNA]</scope>
    <scope>FUNCTION</scope>
    <scope>DISRUPTION PHENOTYPE</scope>
    <scope>PATHWAY</scope>
    <scope>INDUCTION BY JASMONIC ACID AND WOUNDING</scope>
    <source>
        <tissue>Leaf</tissue>
    </source>
</reference>
<reference key="2">
    <citation type="journal article" date="2004" name="Funct. Plant Biol.">
        <title>Analysis of wound-induced gene expression in Nicotiana species with contrasting alkaloid profiles.</title>
        <authorList>
            <person name="Sinclair S.J."/>
            <person name="Johnson R."/>
            <person name="Hamill J.D."/>
        </authorList>
    </citation>
    <scope>INDUCTION BY WOUNDING</scope>
</reference>
<reference key="3">
    <citation type="journal article" date="2019" name="Food Chem. Toxicol.">
        <title>Antiparasitic properties of leaf extracts derived from selected Nicotiana species and Nicotiana tabacum varieties.</title>
        <authorList>
            <person name="Schorderet Weber S."/>
            <person name="Kaminski K.P."/>
            <person name="Perret J.-L."/>
            <person name="Leroy P."/>
            <person name="Mazurov A."/>
            <person name="Peitsch M.C."/>
            <person name="Ivanov N.V."/>
            <person name="Hoeng J."/>
        </authorList>
    </citation>
    <scope>FUNCTION</scope>
    <source>
        <strain>cv. Burley Stella</strain>
        <strain>cv. Burley TN90</strain>
        <strain>cv. Virginia ITB 683</strain>
        <strain>cv. Virginia K326</strain>
    </source>
</reference>
<evidence type="ECO:0000250" key="1">
    <source>
        <dbReference type="UniProtKB" id="P52580"/>
    </source>
</evidence>
<evidence type="ECO:0000250" key="2">
    <source>
        <dbReference type="UniProtKB" id="Q9LD14"/>
    </source>
</evidence>
<evidence type="ECO:0000269" key="3">
    <source>
    </source>
</evidence>
<evidence type="ECO:0000269" key="4">
    <source>
    </source>
</evidence>
<evidence type="ECO:0000269" key="5">
    <source>
    </source>
</evidence>
<evidence type="ECO:0000303" key="6">
    <source>
    </source>
</evidence>
<evidence type="ECO:0000305" key="7"/>
<sequence>MVASEKSKILIIGGTGYIGKYLVETSAKSGHPTFVLIRESTLKNPQKSKLIDTFKSYGVTLLFGDISNQESLLKAIKQVDVVISTVGGQQFADQVNIINAIKEAGNIKRFLPSEFGFDVDHAHAIEPAASLFALKVKIRRMIEAEGIPYTYVICNWFADFFLPNLGHLDAKTPPRDKVVIFGDGNPKAIYVKEEDIATYTIEAVDDPRTLNKTLHMRPPANILSFNEVVSLWEEKIGKTLEKIYLSEEDILEIVKEGPLPLRTNLAICHSVFVNGDSANFEVQPPTGVEATELYPKVKYTTVDEFYNKFV</sequence>
<comment type="function">
    <text evidence="3 4">NADPH-binding protein (PubMed:19011764). Involved in the biosynthesis of pyridine alkaloid natural products, leading mainly to the production of anabasine, anatabine, nicotine and nornicotine, effective deterrents against herbivores with antiparasitic and pesticide properties (neurotoxins); nornicotine serves as the precursor in the synthesis of the carcinogen compound N'-nitrosonornicotine (NNN) (PubMed:19011764, PubMed:31276744). Reductase involved in a late step of tobacco alkaloid biosynthesis (PubMed:19011764). Triggers either the formation of a nicotinic acid-derived precursor or the final condensation reaction of tobacco alkaloids (PubMed:19011764).</text>
</comment>
<comment type="pathway">
    <text evidence="3">Alkaloid biosynthesis; nicotine biosynthesis.</text>
</comment>
<comment type="subunit">
    <text evidence="1">Monomer.</text>
</comment>
<comment type="subcellular location">
    <subcellularLocation>
        <location evidence="1">Cytoplasm</location>
    </subcellularLocation>
</comment>
<comment type="induction">
    <text evidence="3 5">Stimulated by jasmonic acid (MeJa) (PubMed:19011764). Induced by wounding (PubMed:32688942).</text>
</comment>
<comment type="disruption phenotype">
    <text evidence="3">Reduces capacity to produce anabasine and nicotine associated with barely detectable levels of pyridine alkaloids in leaf tissues.</text>
</comment>
<comment type="similarity">
    <text evidence="7">Belongs to the NmrA-type oxidoreductase family. Isoflavone reductase subfamily.</text>
</comment>
<protein>
    <recommendedName>
        <fullName evidence="6">Isoflavone reductase homolog A622</fullName>
        <shortName evidence="6">NgA622</shortName>
        <ecNumber evidence="7">1.3.1.-</ecNumber>
    </recommendedName>
</protein>
<keyword id="KW-0017">Alkaloid metabolism</keyword>
<keyword id="KW-0963">Cytoplasm</keyword>
<keyword id="KW-0521">NADP</keyword>
<keyword id="KW-0560">Oxidoreductase</keyword>
<feature type="chain" id="PRO_0000455800" description="Isoflavone reductase homolog A622">
    <location>
        <begin position="1"/>
        <end position="310"/>
    </location>
</feature>
<feature type="active site" description="Proton acceptor" evidence="2">
    <location>
        <position position="135"/>
    </location>
</feature>
<feature type="binding site" evidence="2">
    <location>
        <begin position="13"/>
        <end position="19"/>
    </location>
    <ligand>
        <name>NADP(+)</name>
        <dbReference type="ChEBI" id="CHEBI:58349"/>
    </ligand>
</feature>
<feature type="binding site" evidence="2">
    <location>
        <position position="38"/>
    </location>
    <ligand>
        <name>NADP(+)</name>
        <dbReference type="ChEBI" id="CHEBI:58349"/>
    </ligand>
</feature>
<feature type="binding site" evidence="2">
    <location>
        <position position="47"/>
    </location>
    <ligand>
        <name>NADP(+)</name>
        <dbReference type="ChEBI" id="CHEBI:58349"/>
    </ligand>
</feature>
<feature type="binding site" evidence="2">
    <location>
        <position position="139"/>
    </location>
    <ligand>
        <name>NADP(+)</name>
        <dbReference type="ChEBI" id="CHEBI:58349"/>
    </ligand>
</feature>
<accession>B7UEU8</accession>
<proteinExistence type="evidence at transcript level"/>